<name>TRUA_SHIB3</name>
<accession>B2TWA0</accession>
<feature type="chain" id="PRO_1000097786" description="tRNA pseudouridine synthase A">
    <location>
        <begin position="1"/>
        <end position="270"/>
    </location>
</feature>
<feature type="region of interest" description="RNA binding" evidence="1">
    <location>
        <begin position="107"/>
        <end position="111"/>
    </location>
</feature>
<feature type="region of interest" description="Interaction with tRNA" evidence="1">
    <location>
        <begin position="168"/>
        <end position="172"/>
    </location>
</feature>
<feature type="active site" description="Nucleophile" evidence="1">
    <location>
        <position position="60"/>
    </location>
</feature>
<feature type="binding site" evidence="1">
    <location>
        <position position="118"/>
    </location>
    <ligand>
        <name>substrate</name>
    </ligand>
</feature>
<feature type="site" description="Interaction with tRNA; Important for base-flipping" evidence="1">
    <location>
        <position position="58"/>
    </location>
</feature>
<feature type="site" description="Interaction with tRNA" evidence="1">
    <location>
        <position position="78"/>
    </location>
</feature>
<feature type="site" description="Interaction with tRNA" evidence="1">
    <location>
        <position position="110"/>
    </location>
</feature>
<feature type="site" description="Interaction with tRNA" evidence="1">
    <location>
        <position position="126"/>
    </location>
</feature>
<feature type="site" description="Interaction with tRNA" evidence="1">
    <location>
        <position position="139"/>
    </location>
</feature>
<dbReference type="EC" id="5.4.99.12" evidence="1"/>
<dbReference type="EMBL" id="CP001063">
    <property type="protein sequence ID" value="ACD09864.1"/>
    <property type="molecule type" value="Genomic_DNA"/>
</dbReference>
<dbReference type="RefSeq" id="WP_001283581.1">
    <property type="nucleotide sequence ID" value="NC_010658.1"/>
</dbReference>
<dbReference type="SMR" id="B2TWA0"/>
<dbReference type="STRING" id="344609.SbBS512_E2696"/>
<dbReference type="GeneID" id="75202599"/>
<dbReference type="KEGG" id="sbc:SbBS512_E2696"/>
<dbReference type="HOGENOM" id="CLU_014673_0_2_6"/>
<dbReference type="Proteomes" id="UP000001030">
    <property type="component" value="Chromosome"/>
</dbReference>
<dbReference type="GO" id="GO:0003723">
    <property type="term" value="F:RNA binding"/>
    <property type="evidence" value="ECO:0007669"/>
    <property type="project" value="InterPro"/>
</dbReference>
<dbReference type="GO" id="GO:0160147">
    <property type="term" value="F:tRNA pseudouridine(38-40) synthase activity"/>
    <property type="evidence" value="ECO:0007669"/>
    <property type="project" value="UniProtKB-EC"/>
</dbReference>
<dbReference type="GO" id="GO:0031119">
    <property type="term" value="P:tRNA pseudouridine synthesis"/>
    <property type="evidence" value="ECO:0007669"/>
    <property type="project" value="UniProtKB-UniRule"/>
</dbReference>
<dbReference type="CDD" id="cd02570">
    <property type="entry name" value="PseudoU_synth_EcTruA"/>
    <property type="match status" value="1"/>
</dbReference>
<dbReference type="FunFam" id="3.30.70.580:FF:000001">
    <property type="entry name" value="tRNA pseudouridine synthase A"/>
    <property type="match status" value="1"/>
</dbReference>
<dbReference type="FunFam" id="3.30.70.660:FF:000001">
    <property type="entry name" value="tRNA pseudouridine synthase A"/>
    <property type="match status" value="1"/>
</dbReference>
<dbReference type="Gene3D" id="3.30.70.660">
    <property type="entry name" value="Pseudouridine synthase I, catalytic domain, C-terminal subdomain"/>
    <property type="match status" value="1"/>
</dbReference>
<dbReference type="Gene3D" id="3.30.70.580">
    <property type="entry name" value="Pseudouridine synthase I, catalytic domain, N-terminal subdomain"/>
    <property type="match status" value="1"/>
</dbReference>
<dbReference type="HAMAP" id="MF_00171">
    <property type="entry name" value="TruA"/>
    <property type="match status" value="1"/>
</dbReference>
<dbReference type="InterPro" id="IPR020103">
    <property type="entry name" value="PsdUridine_synth_cat_dom_sf"/>
</dbReference>
<dbReference type="InterPro" id="IPR001406">
    <property type="entry name" value="PsdUridine_synth_TruA"/>
</dbReference>
<dbReference type="InterPro" id="IPR020097">
    <property type="entry name" value="PsdUridine_synth_TruA_a/b_dom"/>
</dbReference>
<dbReference type="InterPro" id="IPR020095">
    <property type="entry name" value="PsdUridine_synth_TruA_C"/>
</dbReference>
<dbReference type="InterPro" id="IPR020094">
    <property type="entry name" value="TruA/RsuA/RluB/E/F_N"/>
</dbReference>
<dbReference type="NCBIfam" id="TIGR00071">
    <property type="entry name" value="hisT_truA"/>
    <property type="match status" value="1"/>
</dbReference>
<dbReference type="PANTHER" id="PTHR11142">
    <property type="entry name" value="PSEUDOURIDYLATE SYNTHASE"/>
    <property type="match status" value="1"/>
</dbReference>
<dbReference type="PANTHER" id="PTHR11142:SF0">
    <property type="entry name" value="TRNA PSEUDOURIDINE SYNTHASE-LIKE 1"/>
    <property type="match status" value="1"/>
</dbReference>
<dbReference type="Pfam" id="PF01416">
    <property type="entry name" value="PseudoU_synth_1"/>
    <property type="match status" value="2"/>
</dbReference>
<dbReference type="PIRSF" id="PIRSF001430">
    <property type="entry name" value="tRNA_psdUrid_synth"/>
    <property type="match status" value="1"/>
</dbReference>
<dbReference type="SUPFAM" id="SSF55120">
    <property type="entry name" value="Pseudouridine synthase"/>
    <property type="match status" value="1"/>
</dbReference>
<reference key="1">
    <citation type="submission" date="2008-05" db="EMBL/GenBank/DDBJ databases">
        <title>Complete sequence of Shigella boydii serotype 18 strain BS512.</title>
        <authorList>
            <person name="Rasko D.A."/>
            <person name="Rosovitz M."/>
            <person name="Maurelli A.T."/>
            <person name="Myers G."/>
            <person name="Seshadri R."/>
            <person name="Cer R."/>
            <person name="Jiang L."/>
            <person name="Ravel J."/>
            <person name="Sebastian Y."/>
        </authorList>
    </citation>
    <scope>NUCLEOTIDE SEQUENCE [LARGE SCALE GENOMIC DNA]</scope>
    <source>
        <strain>CDC 3083-94 / BS512</strain>
    </source>
</reference>
<protein>
    <recommendedName>
        <fullName evidence="1">tRNA pseudouridine synthase A</fullName>
        <ecNumber evidence="1">5.4.99.12</ecNumber>
    </recommendedName>
    <alternativeName>
        <fullName evidence="1">tRNA pseudouridine(38-40) synthase</fullName>
    </alternativeName>
    <alternativeName>
        <fullName evidence="1">tRNA pseudouridylate synthase I</fullName>
    </alternativeName>
    <alternativeName>
        <fullName evidence="1">tRNA-uridine isomerase I</fullName>
    </alternativeName>
</protein>
<keyword id="KW-0413">Isomerase</keyword>
<keyword id="KW-1185">Reference proteome</keyword>
<keyword id="KW-0819">tRNA processing</keyword>
<comment type="function">
    <text evidence="1">Formation of pseudouridine at positions 38, 39 and 40 in the anticodon stem and loop of transfer RNAs.</text>
</comment>
<comment type="catalytic activity">
    <reaction evidence="1">
        <text>uridine(38/39/40) in tRNA = pseudouridine(38/39/40) in tRNA</text>
        <dbReference type="Rhea" id="RHEA:22376"/>
        <dbReference type="Rhea" id="RHEA-COMP:10085"/>
        <dbReference type="Rhea" id="RHEA-COMP:10087"/>
        <dbReference type="ChEBI" id="CHEBI:65314"/>
        <dbReference type="ChEBI" id="CHEBI:65315"/>
        <dbReference type="EC" id="5.4.99.12"/>
    </reaction>
</comment>
<comment type="subunit">
    <text evidence="1">Homodimer.</text>
</comment>
<comment type="similarity">
    <text evidence="1">Belongs to the tRNA pseudouridine synthase TruA family.</text>
</comment>
<gene>
    <name evidence="1" type="primary">truA</name>
    <name type="ordered locus">SbBS512_E2696</name>
</gene>
<sequence>MSDQQQLPVYKIALGIEYDGSKYYGWQRQNEVRSVQEKLEKALSQVANEPITVFCAGRTDAGVHGTGQVVHFETTAQRKDAAWTLGVNANLPGDIAVRWVKAVPDDFHARFSATARRYRYIIYNHRLRPAVLSKGVTHFYEPLDAERMHRAAQCLLGENDFTSFRAVQCQSRTPWRNVMHINVTRHGPYVVVDIKANAFVHHMVRNIVGSLMEVGAHNQPESWIAELLAAKDRTLAAATAKAEGLYLVAVDYPDRYDLPKPPMGPLFLAD</sequence>
<organism>
    <name type="scientific">Shigella boydii serotype 18 (strain CDC 3083-94 / BS512)</name>
    <dbReference type="NCBI Taxonomy" id="344609"/>
    <lineage>
        <taxon>Bacteria</taxon>
        <taxon>Pseudomonadati</taxon>
        <taxon>Pseudomonadota</taxon>
        <taxon>Gammaproteobacteria</taxon>
        <taxon>Enterobacterales</taxon>
        <taxon>Enterobacteriaceae</taxon>
        <taxon>Shigella</taxon>
    </lineage>
</organism>
<proteinExistence type="inferred from homology"/>
<evidence type="ECO:0000255" key="1">
    <source>
        <dbReference type="HAMAP-Rule" id="MF_00171"/>
    </source>
</evidence>